<accession>Q2FEV0</accession>
<name>ASP23_STAA3</name>
<feature type="chain" id="PRO_0000296116" description="Alkaline shock protein 23">
    <location>
        <begin position="1"/>
        <end position="169"/>
    </location>
</feature>
<feature type="region of interest" description="Disordered" evidence="2">
    <location>
        <begin position="1"/>
        <end position="40"/>
    </location>
</feature>
<feature type="region of interest" description="Disordered" evidence="2">
    <location>
        <begin position="148"/>
        <end position="169"/>
    </location>
</feature>
<feature type="compositionally biased region" description="Basic and acidic residues" evidence="2">
    <location>
        <begin position="19"/>
        <end position="29"/>
    </location>
</feature>
<feature type="compositionally biased region" description="Basic and acidic residues" evidence="2">
    <location>
        <begin position="148"/>
        <end position="158"/>
    </location>
</feature>
<feature type="compositionally biased region" description="Low complexity" evidence="2">
    <location>
        <begin position="159"/>
        <end position="169"/>
    </location>
</feature>
<dbReference type="EMBL" id="CP000255">
    <property type="protein sequence ID" value="ABD22746.1"/>
    <property type="molecule type" value="Genomic_DNA"/>
</dbReference>
<dbReference type="RefSeq" id="WP_000215236.1">
    <property type="nucleotide sequence ID" value="NZ_CP027476.1"/>
</dbReference>
<dbReference type="SMR" id="Q2FEV0"/>
<dbReference type="KEGG" id="saa:SAUSA300_2142"/>
<dbReference type="HOGENOM" id="CLU_113198_1_1_9"/>
<dbReference type="OMA" id="VISAVEW"/>
<dbReference type="Proteomes" id="UP000001939">
    <property type="component" value="Chromosome"/>
</dbReference>
<dbReference type="InterPro" id="IPR005531">
    <property type="entry name" value="Asp23"/>
</dbReference>
<dbReference type="PANTHER" id="PTHR34297:SF3">
    <property type="entry name" value="ALKALINE SHOCK PROTEIN 23"/>
    <property type="match status" value="1"/>
</dbReference>
<dbReference type="PANTHER" id="PTHR34297">
    <property type="entry name" value="HYPOTHETICAL CYTOSOLIC PROTEIN-RELATED"/>
    <property type="match status" value="1"/>
</dbReference>
<dbReference type="Pfam" id="PF03780">
    <property type="entry name" value="Asp23"/>
    <property type="match status" value="1"/>
</dbReference>
<protein>
    <recommendedName>
        <fullName>Alkaline shock protein 23</fullName>
    </recommendedName>
</protein>
<evidence type="ECO:0000250" key="1"/>
<evidence type="ECO:0000256" key="2">
    <source>
        <dbReference type="SAM" id="MobiDB-lite"/>
    </source>
</evidence>
<evidence type="ECO:0000305" key="3"/>
<sequence>MTVDNNKAKQAYDNQTGVNEKEREERQKQQEQNQEPQFKNKLTFSDEVVEKIAGIAAREVKGILDMKGGLTDTFTNAFSSGNNVTQGVSVEVGEKQAAVDLKVILEYGESAPKIFRKVTELVKEQVKYITGLDVVEVNMQVDDVMTQKEWKQKHEKNNENNNQERQGLQ</sequence>
<proteinExistence type="inferred from homology"/>
<reference key="1">
    <citation type="journal article" date="2006" name="Lancet">
        <title>Complete genome sequence of USA300, an epidemic clone of community-acquired meticillin-resistant Staphylococcus aureus.</title>
        <authorList>
            <person name="Diep B.A."/>
            <person name="Gill S.R."/>
            <person name="Chang R.F."/>
            <person name="Phan T.H."/>
            <person name="Chen J.H."/>
            <person name="Davidson M.G."/>
            <person name="Lin F."/>
            <person name="Lin J."/>
            <person name="Carleton H.A."/>
            <person name="Mongodin E.F."/>
            <person name="Sensabaugh G.F."/>
            <person name="Perdreau-Remington F."/>
        </authorList>
    </citation>
    <scope>NUCLEOTIDE SEQUENCE [LARGE SCALE GENOMIC DNA]</scope>
    <source>
        <strain>USA300</strain>
    </source>
</reference>
<organism>
    <name type="scientific">Staphylococcus aureus (strain USA300)</name>
    <dbReference type="NCBI Taxonomy" id="367830"/>
    <lineage>
        <taxon>Bacteria</taxon>
        <taxon>Bacillati</taxon>
        <taxon>Bacillota</taxon>
        <taxon>Bacilli</taxon>
        <taxon>Bacillales</taxon>
        <taxon>Staphylococcaceae</taxon>
        <taxon>Staphylococcus</taxon>
    </lineage>
</organism>
<gene>
    <name type="primary">asp23</name>
    <name type="ordered locus">SAUSA300_2142</name>
</gene>
<comment type="function">
    <text evidence="1">May play a key role in alkaline pH tolerance.</text>
</comment>
<comment type="similarity">
    <text evidence="3">Belongs to the asp23 family.</text>
</comment>